<feature type="chain" id="PRO_0000050668" description="Vitamin B6 salvage pathway transcriptional repressor PtsJ">
    <location>
        <begin position="1"/>
        <end position="430"/>
    </location>
</feature>
<feature type="domain" description="HTH gntR-type" evidence="2">
    <location>
        <begin position="4"/>
        <end position="72"/>
    </location>
</feature>
<feature type="DNA-binding region" description="H-T-H motif" evidence="2">
    <location>
        <begin position="32"/>
        <end position="51"/>
    </location>
</feature>
<feature type="region of interest" description="Disordered" evidence="3">
    <location>
        <begin position="70"/>
        <end position="95"/>
    </location>
</feature>
<feature type="modified residue" description="N6-(pyridoxal phosphate)lysine" evidence="1">
    <location>
        <position position="282"/>
    </location>
</feature>
<accession>P40193</accession>
<evidence type="ECO:0000250" key="1">
    <source>
        <dbReference type="UniProtKB" id="P00509"/>
    </source>
</evidence>
<evidence type="ECO:0000255" key="2">
    <source>
        <dbReference type="PROSITE-ProRule" id="PRU00307"/>
    </source>
</evidence>
<evidence type="ECO:0000256" key="3">
    <source>
        <dbReference type="SAM" id="MobiDB-lite"/>
    </source>
</evidence>
<evidence type="ECO:0000269" key="4">
    <source>
    </source>
</evidence>
<evidence type="ECO:0000303" key="5">
    <source>
    </source>
</evidence>
<evidence type="ECO:0000305" key="6"/>
<evidence type="ECO:0000305" key="7">
    <source>
    </source>
</evidence>
<sequence>MIDGKTANEIFDSIRQHIIAGTLRAEDSLPPVRELASELKVNRNTVAAAYKRLITAGLAQSLGRNGTVIKGSPSPVALEGGDPHTPLHDLSGGNPDPQRLPDLSRYFARLSRTPHLYGDAPVSPELHAWAARWLRDATPVAGEIDITSGAIDAIERLLCAHLLPGDSVAVEDPCFLSSINMLRYAGFSASPVSVDSEGMQPEKLERALNQGARAVILTPRAHNPTGCSLSARRAAALQNMLARYPQVVVIIDDHFALLSSSPWQPVIAQTTQHWAVIRSVSKTLGPDLRLAIVASDSATSAKLRLRLNAGSQWVSHLLQDLVYACLTDPEYQHRLTQTRLFYAARQQKLARALQQYGIAISPGDGVNAWLPLDTHSQATAFTLAKSGWLVREGEAFGVSAPSHGLRITLSTLNDSEINTLAADIHQALNR</sequence>
<gene>
    <name evidence="5" type="primary">ptsJ</name>
    <name type="ordered locus">STM2436</name>
</gene>
<protein>
    <recommendedName>
        <fullName evidence="7">Vitamin B6 salvage pathway transcriptional repressor PtsJ</fullName>
    </recommendedName>
    <alternativeName>
        <fullName evidence="6">HTH-type transcriptional regulatory protein PtsJ</fullName>
    </alternativeName>
</protein>
<dbReference type="EMBL" id="U11243">
    <property type="protein sequence ID" value="AAC43344.1"/>
    <property type="molecule type" value="Genomic_DNA"/>
</dbReference>
<dbReference type="EMBL" id="AE006468">
    <property type="protein sequence ID" value="AAL21330.1"/>
    <property type="molecule type" value="Genomic_DNA"/>
</dbReference>
<dbReference type="RefSeq" id="NP_461371.1">
    <property type="nucleotide sequence ID" value="NC_003197.2"/>
</dbReference>
<dbReference type="RefSeq" id="WP_000565119.1">
    <property type="nucleotide sequence ID" value="NC_003197.2"/>
</dbReference>
<dbReference type="SMR" id="P40193"/>
<dbReference type="STRING" id="99287.STM2436"/>
<dbReference type="PaxDb" id="99287-STM2436"/>
<dbReference type="DNASU" id="1253958"/>
<dbReference type="GeneID" id="1253958"/>
<dbReference type="KEGG" id="stm:STM2436"/>
<dbReference type="PATRIC" id="fig|99287.12.peg.2574"/>
<dbReference type="HOGENOM" id="CLU_017584_2_0_6"/>
<dbReference type="OMA" id="HWAFVRS"/>
<dbReference type="PhylomeDB" id="P40193"/>
<dbReference type="BioCyc" id="SENT99287:STM2436-MONOMER"/>
<dbReference type="Proteomes" id="UP000001014">
    <property type="component" value="Chromosome"/>
</dbReference>
<dbReference type="GO" id="GO:0003677">
    <property type="term" value="F:DNA binding"/>
    <property type="evidence" value="ECO:0000314"/>
    <property type="project" value="UniProtKB"/>
</dbReference>
<dbReference type="GO" id="GO:0003700">
    <property type="term" value="F:DNA-binding transcription factor activity"/>
    <property type="evidence" value="ECO:0000315"/>
    <property type="project" value="UniProtKB"/>
</dbReference>
<dbReference type="GO" id="GO:0030170">
    <property type="term" value="F:pyridoxal phosphate binding"/>
    <property type="evidence" value="ECO:0000314"/>
    <property type="project" value="UniProtKB"/>
</dbReference>
<dbReference type="GO" id="GO:0008483">
    <property type="term" value="F:transaminase activity"/>
    <property type="evidence" value="ECO:0000318"/>
    <property type="project" value="GO_Central"/>
</dbReference>
<dbReference type="GO" id="GO:1901605">
    <property type="term" value="P:alpha-amino acid metabolic process"/>
    <property type="evidence" value="ECO:0000318"/>
    <property type="project" value="GO_Central"/>
</dbReference>
<dbReference type="GO" id="GO:0009058">
    <property type="term" value="P:biosynthetic process"/>
    <property type="evidence" value="ECO:0007669"/>
    <property type="project" value="InterPro"/>
</dbReference>
<dbReference type="GO" id="GO:0045892">
    <property type="term" value="P:negative regulation of DNA-templated transcription"/>
    <property type="evidence" value="ECO:0000315"/>
    <property type="project" value="UniProtKB"/>
</dbReference>
<dbReference type="CDD" id="cd00609">
    <property type="entry name" value="AAT_like"/>
    <property type="match status" value="1"/>
</dbReference>
<dbReference type="CDD" id="cd07377">
    <property type="entry name" value="WHTH_GntR"/>
    <property type="match status" value="1"/>
</dbReference>
<dbReference type="FunFam" id="1.10.10.10:FF:000638">
    <property type="entry name" value="Transcriptional regulator PtsJ"/>
    <property type="match status" value="1"/>
</dbReference>
<dbReference type="FunFam" id="3.40.640.10:FF:000135">
    <property type="entry name" value="Transcriptional regulator PtsJ"/>
    <property type="match status" value="1"/>
</dbReference>
<dbReference type="Gene3D" id="3.40.640.10">
    <property type="entry name" value="Type I PLP-dependent aspartate aminotransferase-like (Major domain)"/>
    <property type="match status" value="1"/>
</dbReference>
<dbReference type="Gene3D" id="1.10.10.10">
    <property type="entry name" value="Winged helix-like DNA-binding domain superfamily/Winged helix DNA-binding domain"/>
    <property type="match status" value="1"/>
</dbReference>
<dbReference type="InterPro" id="IPR004839">
    <property type="entry name" value="Aminotransferase_I/II_large"/>
</dbReference>
<dbReference type="InterPro" id="IPR051446">
    <property type="entry name" value="HTH_trans_reg/aminotransferase"/>
</dbReference>
<dbReference type="InterPro" id="IPR015424">
    <property type="entry name" value="PyrdxlP-dep_Trfase"/>
</dbReference>
<dbReference type="InterPro" id="IPR015421">
    <property type="entry name" value="PyrdxlP-dep_Trfase_major"/>
</dbReference>
<dbReference type="InterPro" id="IPR000524">
    <property type="entry name" value="Tscrpt_reg_HTH_GntR"/>
</dbReference>
<dbReference type="InterPro" id="IPR036388">
    <property type="entry name" value="WH-like_DNA-bd_sf"/>
</dbReference>
<dbReference type="InterPro" id="IPR036390">
    <property type="entry name" value="WH_DNA-bd_sf"/>
</dbReference>
<dbReference type="NCBIfam" id="NF012025">
    <property type="entry name" value="PRK15481.1"/>
    <property type="match status" value="1"/>
</dbReference>
<dbReference type="PANTHER" id="PTHR46577">
    <property type="entry name" value="HTH-TYPE TRANSCRIPTIONAL REGULATORY PROTEIN GABR"/>
    <property type="match status" value="1"/>
</dbReference>
<dbReference type="PANTHER" id="PTHR46577:SF1">
    <property type="entry name" value="HTH-TYPE TRANSCRIPTIONAL REGULATORY PROTEIN GABR"/>
    <property type="match status" value="1"/>
</dbReference>
<dbReference type="Pfam" id="PF00155">
    <property type="entry name" value="Aminotran_1_2"/>
    <property type="match status" value="1"/>
</dbReference>
<dbReference type="Pfam" id="PF00392">
    <property type="entry name" value="GntR"/>
    <property type="match status" value="1"/>
</dbReference>
<dbReference type="SMART" id="SM00345">
    <property type="entry name" value="HTH_GNTR"/>
    <property type="match status" value="1"/>
</dbReference>
<dbReference type="SUPFAM" id="SSF53383">
    <property type="entry name" value="PLP-dependent transferases"/>
    <property type="match status" value="1"/>
</dbReference>
<dbReference type="SUPFAM" id="SSF46785">
    <property type="entry name" value="Winged helix' DNA-binding domain"/>
    <property type="match status" value="1"/>
</dbReference>
<dbReference type="PROSITE" id="PS50949">
    <property type="entry name" value="HTH_GNTR"/>
    <property type="match status" value="1"/>
</dbReference>
<proteinExistence type="evidence at protein level"/>
<reference key="1">
    <citation type="journal article" date="1995" name="DNA Seq.">
        <title>Nucleotide sequence of the region between crr and cysM in Salmonella typhimurium: five novel ORFs including one encoding a putative transcriptional regulator of the phosphotransferase system.</title>
        <authorList>
            <person name="Titgemeyer F.M."/>
            <person name="Reizer J."/>
            <person name="Reizer A."/>
            <person name="Tang J."/>
            <person name="Parr T.R. Jr."/>
            <person name="Saier M.H. Jr."/>
        </authorList>
    </citation>
    <scope>NUCLEOTIDE SEQUENCE [GENOMIC DNA]</scope>
    <source>
        <strain>LT2</strain>
    </source>
</reference>
<reference key="2">
    <citation type="journal article" date="2001" name="Nature">
        <title>Complete genome sequence of Salmonella enterica serovar Typhimurium LT2.</title>
        <authorList>
            <person name="McClelland M."/>
            <person name="Sanderson K.E."/>
            <person name="Spieth J."/>
            <person name="Clifton S.W."/>
            <person name="Latreille P."/>
            <person name="Courtney L."/>
            <person name="Porwollik S."/>
            <person name="Ali J."/>
            <person name="Dante M."/>
            <person name="Du F."/>
            <person name="Hou S."/>
            <person name="Layman D."/>
            <person name="Leonard S."/>
            <person name="Nguyen C."/>
            <person name="Scott K."/>
            <person name="Holmes A."/>
            <person name="Grewal N."/>
            <person name="Mulvaney E."/>
            <person name="Ryan E."/>
            <person name="Sun H."/>
            <person name="Florea L."/>
            <person name="Miller W."/>
            <person name="Stoneking T."/>
            <person name="Nhan M."/>
            <person name="Waterston R."/>
            <person name="Wilson R.K."/>
        </authorList>
    </citation>
    <scope>NUCLEOTIDE SEQUENCE [LARGE SCALE GENOMIC DNA]</scope>
    <source>
        <strain>LT2 / SGSC1412 / ATCC 700720</strain>
    </source>
</reference>
<reference key="3">
    <citation type="journal article" date="2017" name="FEBS J.">
        <title>Salmonella typhimurium PtsJ is a novel MocR-like transcriptional repressor involved in regulating the vitamin B6 salvage pathway.</title>
        <authorList>
            <person name="Tramonti A."/>
            <person name="Milano T."/>
            <person name="Nardella C."/>
            <person name="di Salvo M.L."/>
            <person name="Pascarella S."/>
            <person name="Contestabile R."/>
        </authorList>
    </citation>
    <scope>FUNCTION</scope>
    <scope>DNA-BINDING</scope>
    <scope>DISRUPTION PHENOTYPE</scope>
    <scope>INDUCTION</scope>
    <scope>PLP-BINDING</scope>
    <scope>SUBUNIT</scope>
    <source>
        <strain>LT2</strain>
    </source>
</reference>
<comment type="function">
    <text evidence="4">Acts as a transcriptional repressor of the pdxK gene, encoding a pyridoxal kinase involved in the vitamin B6 salvage pathway. Also represses transcription of its own gene. Binds to the ptsJ-pdxK intergenic region, but does not bind pdxY and pdxH promoters. Among all six B6 vitamers, only pyridoxal 5'-phosphate (PLP) clearly binds to the protein and acts as an effector molecule for PtsJ, inducing a protein conformational change that increases affinity for DNA. Thus, PLP stabilizes protein-DNA interactions, reinforcing repression.</text>
</comment>
<comment type="subunit">
    <text evidence="4">Homodimer in both apo- and holo-forms.</text>
</comment>
<comment type="induction">
    <text evidence="4">Represses its own expression.</text>
</comment>
<comment type="disruption phenotype">
    <text evidence="4">Cells lacking this gene display a 80-fold increase in pdxK expression with respect to wild-type when grown in minimal medium. A much lower but significant 2/3-fold increase of expression is also observed for pdxY and pdxH.</text>
</comment>
<comment type="similarity">
    <text evidence="6">In the C-terminal section; belongs to the class-I pyridoxal-phosphate-dependent aminotransferase family.</text>
</comment>
<organism>
    <name type="scientific">Salmonella typhimurium (strain LT2 / SGSC1412 / ATCC 700720)</name>
    <dbReference type="NCBI Taxonomy" id="99287"/>
    <lineage>
        <taxon>Bacteria</taxon>
        <taxon>Pseudomonadati</taxon>
        <taxon>Pseudomonadota</taxon>
        <taxon>Gammaproteobacteria</taxon>
        <taxon>Enterobacterales</taxon>
        <taxon>Enterobacteriaceae</taxon>
        <taxon>Salmonella</taxon>
    </lineage>
</organism>
<name>PTSJ_SALTY</name>
<keyword id="KW-0238">DNA-binding</keyword>
<keyword id="KW-0663">Pyridoxal phosphate</keyword>
<keyword id="KW-1185">Reference proteome</keyword>
<keyword id="KW-0678">Repressor</keyword>
<keyword id="KW-0804">Transcription</keyword>
<keyword id="KW-0805">Transcription regulation</keyword>